<comment type="function">
    <text evidence="1">Responsible for the low-affinity transport of potassium into the cell. Likely operates as a K(+):H(+) symporter.</text>
</comment>
<comment type="catalytic activity">
    <reaction evidence="1">
        <text>K(+)(in) + H(+)(in) = K(+)(out) + H(+)(out)</text>
        <dbReference type="Rhea" id="RHEA:28490"/>
        <dbReference type="ChEBI" id="CHEBI:15378"/>
        <dbReference type="ChEBI" id="CHEBI:29103"/>
    </reaction>
    <physiologicalReaction direction="right-to-left" evidence="1">
        <dbReference type="Rhea" id="RHEA:28492"/>
    </physiologicalReaction>
</comment>
<comment type="subcellular location">
    <subcellularLocation>
        <location evidence="1">Cell inner membrane</location>
        <topology evidence="1">Multi-pass membrane protein</topology>
    </subcellularLocation>
</comment>
<comment type="similarity">
    <text evidence="1">Belongs to the HAK/KUP transporter (TC 2.A.72) family.</text>
</comment>
<evidence type="ECO:0000255" key="1">
    <source>
        <dbReference type="HAMAP-Rule" id="MF_01522"/>
    </source>
</evidence>
<gene>
    <name evidence="1" type="primary">kup</name>
    <name type="ordered locus">ECP_3946</name>
</gene>
<name>KUP_ECOL5</name>
<sequence>MSTDNKQSLPAITLAAIGVVYGDIGTSPLYTLRECLSGQFGFGVERDAVFGFLSLIFWLLIFVVSIKYLTFVMRADNAGEGGILTLMSLAGRNTSARTTSMLVIMGLIGGSFFYGEVVITPAISVMSAIEGLEIVAPQLDTWIVPLSIIVLTLLFMIQKHGTAMVGQLFAPIMLTWFLILAGLGLRSIIANPEVLHALNPMWAVHFFLEYKTVSFIALGAVVLSITGVEALYADMGHFGKFPIRLAWFTVVLPSLTLNYFGQGALLLKNPEAIKNPFFLLAPDWALIPLLIIAALATVIASQAVISGVFSLTRQAVRLGYLSPMRIIHTSEMESGQIYIPFVNWMLYVAVVIVIVSFEHSSNLAAAYGIAVTGTMVLTSILSTTVARQNWHWNKYFVALILIAFLCVDIPLFTANLDKLLSGGWLPLSLGTVMFIVMTTWKSERFRLLRRMHEHGNSLEAMIASLEKSPPVRVPGTAVYMSRAINVIPFALMHNLKHNKVLHERVILLTLRTEDAPYVHNVRRVQIEQLSPTFWRVVASYGWRETPNVEEVFHRCGLEGLSCRMMETSFFMSHESLILGKRPWYLRLRGKLYLLLQRNALRAPDQFEIPPNRVIELGTQVEI</sequence>
<dbReference type="EMBL" id="CP000247">
    <property type="protein sequence ID" value="ABG71917.1"/>
    <property type="molecule type" value="Genomic_DNA"/>
</dbReference>
<dbReference type="RefSeq" id="WP_000102334.1">
    <property type="nucleotide sequence ID" value="NC_008253.1"/>
</dbReference>
<dbReference type="KEGG" id="ecp:ECP_3946"/>
<dbReference type="HOGENOM" id="CLU_008142_4_2_6"/>
<dbReference type="Proteomes" id="UP000009182">
    <property type="component" value="Chromosome"/>
</dbReference>
<dbReference type="GO" id="GO:0005886">
    <property type="term" value="C:plasma membrane"/>
    <property type="evidence" value="ECO:0007669"/>
    <property type="project" value="UniProtKB-SubCell"/>
</dbReference>
<dbReference type="GO" id="GO:0015079">
    <property type="term" value="F:potassium ion transmembrane transporter activity"/>
    <property type="evidence" value="ECO:0007669"/>
    <property type="project" value="UniProtKB-UniRule"/>
</dbReference>
<dbReference type="GO" id="GO:0015293">
    <property type="term" value="F:symporter activity"/>
    <property type="evidence" value="ECO:0007669"/>
    <property type="project" value="UniProtKB-UniRule"/>
</dbReference>
<dbReference type="HAMAP" id="MF_01522">
    <property type="entry name" value="Kup"/>
    <property type="match status" value="1"/>
</dbReference>
<dbReference type="InterPro" id="IPR003855">
    <property type="entry name" value="K+_transporter"/>
</dbReference>
<dbReference type="InterPro" id="IPR053952">
    <property type="entry name" value="K_trans_C"/>
</dbReference>
<dbReference type="InterPro" id="IPR053951">
    <property type="entry name" value="K_trans_N"/>
</dbReference>
<dbReference type="InterPro" id="IPR023051">
    <property type="entry name" value="Kup"/>
</dbReference>
<dbReference type="NCBIfam" id="TIGR00794">
    <property type="entry name" value="kup"/>
    <property type="match status" value="1"/>
</dbReference>
<dbReference type="NCBIfam" id="NF008015">
    <property type="entry name" value="PRK10745.1"/>
    <property type="match status" value="1"/>
</dbReference>
<dbReference type="PANTHER" id="PTHR30540:SF79">
    <property type="entry name" value="LOW AFFINITY POTASSIUM TRANSPORT SYSTEM PROTEIN KUP"/>
    <property type="match status" value="1"/>
</dbReference>
<dbReference type="PANTHER" id="PTHR30540">
    <property type="entry name" value="OSMOTIC STRESS POTASSIUM TRANSPORTER"/>
    <property type="match status" value="1"/>
</dbReference>
<dbReference type="Pfam" id="PF02705">
    <property type="entry name" value="K_trans"/>
    <property type="match status" value="1"/>
</dbReference>
<dbReference type="Pfam" id="PF22776">
    <property type="entry name" value="K_trans_C"/>
    <property type="match status" value="1"/>
</dbReference>
<keyword id="KW-0997">Cell inner membrane</keyword>
<keyword id="KW-1003">Cell membrane</keyword>
<keyword id="KW-0406">Ion transport</keyword>
<keyword id="KW-0472">Membrane</keyword>
<keyword id="KW-0630">Potassium</keyword>
<keyword id="KW-0633">Potassium transport</keyword>
<keyword id="KW-0769">Symport</keyword>
<keyword id="KW-0812">Transmembrane</keyword>
<keyword id="KW-1133">Transmembrane helix</keyword>
<keyword id="KW-0813">Transport</keyword>
<accession>Q0TAW2</accession>
<feature type="chain" id="PRO_0000279785" description="Low affinity potassium transport system protein Kup">
    <location>
        <begin position="1"/>
        <end position="622"/>
    </location>
</feature>
<feature type="transmembrane region" description="Helical" evidence="1">
    <location>
        <begin position="9"/>
        <end position="29"/>
    </location>
</feature>
<feature type="transmembrane region" description="Helical" evidence="1">
    <location>
        <begin position="49"/>
        <end position="69"/>
    </location>
</feature>
<feature type="transmembrane region" description="Helical" evidence="1">
    <location>
        <begin position="103"/>
        <end position="123"/>
    </location>
</feature>
<feature type="transmembrane region" description="Helical" evidence="1">
    <location>
        <begin position="137"/>
        <end position="157"/>
    </location>
</feature>
<feature type="transmembrane region" description="Helical" evidence="1">
    <location>
        <begin position="165"/>
        <end position="185"/>
    </location>
</feature>
<feature type="transmembrane region" description="Helical" evidence="1">
    <location>
        <begin position="213"/>
        <end position="233"/>
    </location>
</feature>
<feature type="transmembrane region" description="Helical" evidence="1">
    <location>
        <begin position="247"/>
        <end position="267"/>
    </location>
</feature>
<feature type="transmembrane region" description="Helical" evidence="1">
    <location>
        <begin position="276"/>
        <end position="296"/>
    </location>
</feature>
<feature type="transmembrane region" description="Helical" evidence="1">
    <location>
        <begin position="337"/>
        <end position="357"/>
    </location>
</feature>
<feature type="transmembrane region" description="Helical" evidence="1">
    <location>
        <begin position="363"/>
        <end position="383"/>
    </location>
</feature>
<feature type="transmembrane region" description="Helical" evidence="1">
    <location>
        <begin position="396"/>
        <end position="416"/>
    </location>
</feature>
<feature type="transmembrane region" description="Helical" evidence="1">
    <location>
        <begin position="419"/>
        <end position="439"/>
    </location>
</feature>
<reference key="1">
    <citation type="journal article" date="2006" name="Mol. Microbiol.">
        <title>Role of pathogenicity island-associated integrases in the genome plasticity of uropathogenic Escherichia coli strain 536.</title>
        <authorList>
            <person name="Hochhut B."/>
            <person name="Wilde C."/>
            <person name="Balling G."/>
            <person name="Middendorf B."/>
            <person name="Dobrindt U."/>
            <person name="Brzuszkiewicz E."/>
            <person name="Gottschalk G."/>
            <person name="Carniel E."/>
            <person name="Hacker J."/>
        </authorList>
    </citation>
    <scope>NUCLEOTIDE SEQUENCE [LARGE SCALE GENOMIC DNA]</scope>
    <source>
        <strain>536 / UPEC</strain>
    </source>
</reference>
<organism>
    <name type="scientific">Escherichia coli O6:K15:H31 (strain 536 / UPEC)</name>
    <dbReference type="NCBI Taxonomy" id="362663"/>
    <lineage>
        <taxon>Bacteria</taxon>
        <taxon>Pseudomonadati</taxon>
        <taxon>Pseudomonadota</taxon>
        <taxon>Gammaproteobacteria</taxon>
        <taxon>Enterobacterales</taxon>
        <taxon>Enterobacteriaceae</taxon>
        <taxon>Escherichia</taxon>
    </lineage>
</organism>
<protein>
    <recommendedName>
        <fullName evidence="1">Low affinity potassium transport system protein Kup</fullName>
    </recommendedName>
    <alternativeName>
        <fullName evidence="1">Kup system potassium uptake protein</fullName>
    </alternativeName>
</protein>
<proteinExistence type="inferred from homology"/>